<comment type="function">
    <text evidence="1">Nucleoside triphosphate pyrophosphatase that hydrolyzes dTTP and UTP. May have a dual role in cell division arrest and in preventing the incorporation of modified nucleotides into cellular nucleic acids.</text>
</comment>
<comment type="catalytic activity">
    <reaction evidence="1">
        <text>dTTP + H2O = dTMP + diphosphate + H(+)</text>
        <dbReference type="Rhea" id="RHEA:28534"/>
        <dbReference type="ChEBI" id="CHEBI:15377"/>
        <dbReference type="ChEBI" id="CHEBI:15378"/>
        <dbReference type="ChEBI" id="CHEBI:33019"/>
        <dbReference type="ChEBI" id="CHEBI:37568"/>
        <dbReference type="ChEBI" id="CHEBI:63528"/>
        <dbReference type="EC" id="3.6.1.9"/>
    </reaction>
</comment>
<comment type="catalytic activity">
    <reaction evidence="1">
        <text>UTP + H2O = UMP + diphosphate + H(+)</text>
        <dbReference type="Rhea" id="RHEA:29395"/>
        <dbReference type="ChEBI" id="CHEBI:15377"/>
        <dbReference type="ChEBI" id="CHEBI:15378"/>
        <dbReference type="ChEBI" id="CHEBI:33019"/>
        <dbReference type="ChEBI" id="CHEBI:46398"/>
        <dbReference type="ChEBI" id="CHEBI:57865"/>
        <dbReference type="EC" id="3.6.1.9"/>
    </reaction>
</comment>
<comment type="cofactor">
    <cofactor evidence="1">
        <name>a divalent metal cation</name>
        <dbReference type="ChEBI" id="CHEBI:60240"/>
    </cofactor>
</comment>
<comment type="subcellular location">
    <subcellularLocation>
        <location evidence="1">Cytoplasm</location>
    </subcellularLocation>
</comment>
<comment type="similarity">
    <text evidence="1">Belongs to the Maf family. YhdE subfamily.</text>
</comment>
<feature type="chain" id="PRO_1000081709" description="dTTP/UTP pyrophosphatase">
    <location>
        <begin position="1"/>
        <end position="191"/>
    </location>
</feature>
<feature type="active site" description="Proton acceptor" evidence="1">
    <location>
        <position position="69"/>
    </location>
</feature>
<feature type="site" description="Important for substrate specificity" evidence="1">
    <location>
        <position position="12"/>
    </location>
</feature>
<feature type="site" description="Important for substrate specificity" evidence="1">
    <location>
        <position position="70"/>
    </location>
</feature>
<feature type="site" description="Important for substrate specificity" evidence="1">
    <location>
        <position position="152"/>
    </location>
</feature>
<organism>
    <name type="scientific">Bacillus cytotoxicus (strain DSM 22905 / CIP 110041 / 391-98 / NVH 391-98)</name>
    <dbReference type="NCBI Taxonomy" id="315749"/>
    <lineage>
        <taxon>Bacteria</taxon>
        <taxon>Bacillati</taxon>
        <taxon>Bacillota</taxon>
        <taxon>Bacilli</taxon>
        <taxon>Bacillales</taxon>
        <taxon>Bacillaceae</taxon>
        <taxon>Bacillus</taxon>
        <taxon>Bacillus cereus group</taxon>
    </lineage>
</organism>
<name>NTPPA_BACCN</name>
<gene>
    <name type="primary">maf</name>
    <name type="ordered locus">Bcer98_3171</name>
</gene>
<dbReference type="EC" id="3.6.1.9" evidence="1"/>
<dbReference type="EMBL" id="CP000764">
    <property type="protein sequence ID" value="ABS23394.1"/>
    <property type="molecule type" value="Genomic_DNA"/>
</dbReference>
<dbReference type="RefSeq" id="WP_012095630.1">
    <property type="nucleotide sequence ID" value="NC_009674.1"/>
</dbReference>
<dbReference type="SMR" id="A7GTD6"/>
<dbReference type="STRING" id="315749.Bcer98_3171"/>
<dbReference type="GeneID" id="33898418"/>
<dbReference type="KEGG" id="bcy:Bcer98_3171"/>
<dbReference type="eggNOG" id="COG0424">
    <property type="taxonomic scope" value="Bacteria"/>
</dbReference>
<dbReference type="HOGENOM" id="CLU_040416_0_0_9"/>
<dbReference type="OrthoDB" id="9807767at2"/>
<dbReference type="Proteomes" id="UP000002300">
    <property type="component" value="Chromosome"/>
</dbReference>
<dbReference type="GO" id="GO:0005737">
    <property type="term" value="C:cytoplasm"/>
    <property type="evidence" value="ECO:0007669"/>
    <property type="project" value="UniProtKB-SubCell"/>
</dbReference>
<dbReference type="GO" id="GO:0036218">
    <property type="term" value="F:dTTP diphosphatase activity"/>
    <property type="evidence" value="ECO:0007669"/>
    <property type="project" value="RHEA"/>
</dbReference>
<dbReference type="GO" id="GO:0036221">
    <property type="term" value="F:UTP diphosphatase activity"/>
    <property type="evidence" value="ECO:0007669"/>
    <property type="project" value="RHEA"/>
</dbReference>
<dbReference type="GO" id="GO:0009117">
    <property type="term" value="P:nucleotide metabolic process"/>
    <property type="evidence" value="ECO:0007669"/>
    <property type="project" value="UniProtKB-KW"/>
</dbReference>
<dbReference type="CDD" id="cd00555">
    <property type="entry name" value="Maf"/>
    <property type="match status" value="1"/>
</dbReference>
<dbReference type="FunFam" id="3.90.950.10:FF:000007">
    <property type="entry name" value="dTTP/UTP pyrophosphatase"/>
    <property type="match status" value="1"/>
</dbReference>
<dbReference type="Gene3D" id="3.90.950.10">
    <property type="match status" value="1"/>
</dbReference>
<dbReference type="HAMAP" id="MF_00528">
    <property type="entry name" value="Maf"/>
    <property type="match status" value="1"/>
</dbReference>
<dbReference type="InterPro" id="IPR029001">
    <property type="entry name" value="ITPase-like_fam"/>
</dbReference>
<dbReference type="InterPro" id="IPR003697">
    <property type="entry name" value="Maf-like"/>
</dbReference>
<dbReference type="NCBIfam" id="TIGR00172">
    <property type="entry name" value="maf"/>
    <property type="match status" value="1"/>
</dbReference>
<dbReference type="PANTHER" id="PTHR43213">
    <property type="entry name" value="BIFUNCTIONAL DTTP/UTP PYROPHOSPHATASE/METHYLTRANSFERASE PROTEIN-RELATED"/>
    <property type="match status" value="1"/>
</dbReference>
<dbReference type="PANTHER" id="PTHR43213:SF5">
    <property type="entry name" value="BIFUNCTIONAL DTTP_UTP PYROPHOSPHATASE_METHYLTRANSFERASE PROTEIN-RELATED"/>
    <property type="match status" value="1"/>
</dbReference>
<dbReference type="Pfam" id="PF02545">
    <property type="entry name" value="Maf"/>
    <property type="match status" value="1"/>
</dbReference>
<dbReference type="PIRSF" id="PIRSF006305">
    <property type="entry name" value="Maf"/>
    <property type="match status" value="1"/>
</dbReference>
<dbReference type="SUPFAM" id="SSF52972">
    <property type="entry name" value="ITPase-like"/>
    <property type="match status" value="1"/>
</dbReference>
<proteinExistence type="inferred from homology"/>
<protein>
    <recommendedName>
        <fullName evidence="1">dTTP/UTP pyrophosphatase</fullName>
        <shortName evidence="1">dTTPase/UTPase</shortName>
        <ecNumber evidence="1">3.6.1.9</ecNumber>
    </recommendedName>
    <alternativeName>
        <fullName evidence="1">Nucleoside triphosphate pyrophosphatase</fullName>
    </alternativeName>
    <alternativeName>
        <fullName evidence="1">Nucleotide pyrophosphatase</fullName>
        <shortName evidence="1">Nucleotide PPase</shortName>
    </alternativeName>
</protein>
<sequence length="191" mass="20957">MKKFILASGSPRRKELLELANVPFEVVVSEVEETIGAYSSPADIVMALALQKASAVAETHEESIVLGADTIVTYDSRILGKPKDAAEAKEMLQLLSGKTHEVYTGVALMSKEKTVTFYERTEVTFWELTEEEIDVYIATKEPLDKAGSYGIQGKGAIFVQHIQGDYYSVVGLPIARLVRELKQFDSGASHA</sequence>
<evidence type="ECO:0000255" key="1">
    <source>
        <dbReference type="HAMAP-Rule" id="MF_00528"/>
    </source>
</evidence>
<reference key="1">
    <citation type="journal article" date="2008" name="Chem. Biol. Interact.">
        <title>Extending the Bacillus cereus group genomics to putative food-borne pathogens of different toxicity.</title>
        <authorList>
            <person name="Lapidus A."/>
            <person name="Goltsman E."/>
            <person name="Auger S."/>
            <person name="Galleron N."/>
            <person name="Segurens B."/>
            <person name="Dossat C."/>
            <person name="Land M.L."/>
            <person name="Broussolle V."/>
            <person name="Brillard J."/>
            <person name="Guinebretiere M.-H."/>
            <person name="Sanchis V."/>
            <person name="Nguen-the C."/>
            <person name="Lereclus D."/>
            <person name="Richardson P."/>
            <person name="Wincker P."/>
            <person name="Weissenbach J."/>
            <person name="Ehrlich S.D."/>
            <person name="Sorokin A."/>
        </authorList>
    </citation>
    <scope>NUCLEOTIDE SEQUENCE [LARGE SCALE GENOMIC DNA]</scope>
    <source>
        <strain>DSM 22905 / CIP 110041 / 391-98 / NVH 391-98</strain>
    </source>
</reference>
<accession>A7GTD6</accession>
<keyword id="KW-0963">Cytoplasm</keyword>
<keyword id="KW-0378">Hydrolase</keyword>
<keyword id="KW-0546">Nucleotide metabolism</keyword>